<accession>A9MN67</accession>
<evidence type="ECO:0000255" key="1">
    <source>
        <dbReference type="HAMAP-Rule" id="MF_01371"/>
    </source>
</evidence>
<evidence type="ECO:0000305" key="2"/>
<gene>
    <name evidence="1" type="primary">rpmD</name>
    <name type="ordered locus">SARI_04207</name>
</gene>
<feature type="chain" id="PRO_1000087262" description="Large ribosomal subunit protein uL30">
    <location>
        <begin position="1"/>
        <end position="59"/>
    </location>
</feature>
<dbReference type="EMBL" id="CP000880">
    <property type="protein sequence ID" value="ABX23996.1"/>
    <property type="molecule type" value="Genomic_DNA"/>
</dbReference>
<dbReference type="SMR" id="A9MN67"/>
<dbReference type="STRING" id="41514.SARI_04207"/>
<dbReference type="KEGG" id="ses:SARI_04207"/>
<dbReference type="HOGENOM" id="CLU_131047_1_4_6"/>
<dbReference type="Proteomes" id="UP000002084">
    <property type="component" value="Chromosome"/>
</dbReference>
<dbReference type="GO" id="GO:0022625">
    <property type="term" value="C:cytosolic large ribosomal subunit"/>
    <property type="evidence" value="ECO:0007669"/>
    <property type="project" value="TreeGrafter"/>
</dbReference>
<dbReference type="GO" id="GO:0003735">
    <property type="term" value="F:structural constituent of ribosome"/>
    <property type="evidence" value="ECO:0007669"/>
    <property type="project" value="InterPro"/>
</dbReference>
<dbReference type="GO" id="GO:0006412">
    <property type="term" value="P:translation"/>
    <property type="evidence" value="ECO:0007669"/>
    <property type="project" value="UniProtKB-UniRule"/>
</dbReference>
<dbReference type="CDD" id="cd01658">
    <property type="entry name" value="Ribosomal_L30"/>
    <property type="match status" value="1"/>
</dbReference>
<dbReference type="FunFam" id="3.30.1390.20:FF:000001">
    <property type="entry name" value="50S ribosomal protein L30"/>
    <property type="match status" value="1"/>
</dbReference>
<dbReference type="Gene3D" id="3.30.1390.20">
    <property type="entry name" value="Ribosomal protein L30, ferredoxin-like fold domain"/>
    <property type="match status" value="1"/>
</dbReference>
<dbReference type="HAMAP" id="MF_01371_B">
    <property type="entry name" value="Ribosomal_uL30_B"/>
    <property type="match status" value="1"/>
</dbReference>
<dbReference type="InterPro" id="IPR036919">
    <property type="entry name" value="Ribo_uL30_ferredoxin-like_sf"/>
</dbReference>
<dbReference type="InterPro" id="IPR005996">
    <property type="entry name" value="Ribosomal_uL30_bac-type"/>
</dbReference>
<dbReference type="InterPro" id="IPR018038">
    <property type="entry name" value="Ribosomal_uL30_CS"/>
</dbReference>
<dbReference type="InterPro" id="IPR016082">
    <property type="entry name" value="Ribosomal_uL30_ferredoxin-like"/>
</dbReference>
<dbReference type="NCBIfam" id="TIGR01308">
    <property type="entry name" value="rpmD_bact"/>
    <property type="match status" value="1"/>
</dbReference>
<dbReference type="PANTHER" id="PTHR15892:SF2">
    <property type="entry name" value="LARGE RIBOSOMAL SUBUNIT PROTEIN UL30M"/>
    <property type="match status" value="1"/>
</dbReference>
<dbReference type="PANTHER" id="PTHR15892">
    <property type="entry name" value="MITOCHONDRIAL RIBOSOMAL PROTEIN L30"/>
    <property type="match status" value="1"/>
</dbReference>
<dbReference type="Pfam" id="PF00327">
    <property type="entry name" value="Ribosomal_L30"/>
    <property type="match status" value="1"/>
</dbReference>
<dbReference type="PIRSF" id="PIRSF002211">
    <property type="entry name" value="Ribosomal_L30_bac-type"/>
    <property type="match status" value="1"/>
</dbReference>
<dbReference type="SUPFAM" id="SSF55129">
    <property type="entry name" value="Ribosomal protein L30p/L7e"/>
    <property type="match status" value="1"/>
</dbReference>
<dbReference type="PROSITE" id="PS00634">
    <property type="entry name" value="RIBOSOMAL_L30"/>
    <property type="match status" value="1"/>
</dbReference>
<comment type="subunit">
    <text evidence="1">Part of the 50S ribosomal subunit.</text>
</comment>
<comment type="similarity">
    <text evidence="1">Belongs to the universal ribosomal protein uL30 family.</text>
</comment>
<keyword id="KW-1185">Reference proteome</keyword>
<keyword id="KW-0687">Ribonucleoprotein</keyword>
<keyword id="KW-0689">Ribosomal protein</keyword>
<protein>
    <recommendedName>
        <fullName evidence="1">Large ribosomal subunit protein uL30</fullName>
    </recommendedName>
    <alternativeName>
        <fullName evidence="2">50S ribosomal protein L30</fullName>
    </alternativeName>
</protein>
<sequence length="59" mass="6514">MAKTIKITQTRSAIGRLPKHKATLLGLGLRRIGHTVEREDTPAVRGMVNAVSFMVKVEE</sequence>
<proteinExistence type="inferred from homology"/>
<organism>
    <name type="scientific">Salmonella arizonae (strain ATCC BAA-731 / CDC346-86 / RSK2980)</name>
    <dbReference type="NCBI Taxonomy" id="41514"/>
    <lineage>
        <taxon>Bacteria</taxon>
        <taxon>Pseudomonadati</taxon>
        <taxon>Pseudomonadota</taxon>
        <taxon>Gammaproteobacteria</taxon>
        <taxon>Enterobacterales</taxon>
        <taxon>Enterobacteriaceae</taxon>
        <taxon>Salmonella</taxon>
    </lineage>
</organism>
<name>RL30_SALAR</name>
<reference key="1">
    <citation type="submission" date="2007-11" db="EMBL/GenBank/DDBJ databases">
        <authorList>
            <consortium name="The Salmonella enterica serovar Arizonae Genome Sequencing Project"/>
            <person name="McClelland M."/>
            <person name="Sanderson E.K."/>
            <person name="Porwollik S."/>
            <person name="Spieth J."/>
            <person name="Clifton W.S."/>
            <person name="Fulton R."/>
            <person name="Chunyan W."/>
            <person name="Wollam A."/>
            <person name="Shah N."/>
            <person name="Pepin K."/>
            <person name="Bhonagiri V."/>
            <person name="Nash W."/>
            <person name="Johnson M."/>
            <person name="Thiruvilangam P."/>
            <person name="Wilson R."/>
        </authorList>
    </citation>
    <scope>NUCLEOTIDE SEQUENCE [LARGE SCALE GENOMIC DNA]</scope>
    <source>
        <strain>ATCC BAA-731 / CDC346-86 / RSK2980</strain>
    </source>
</reference>